<gene>
    <name type="primary">mdh</name>
</gene>
<dbReference type="EC" id="1.1.1.37" evidence="2"/>
<dbReference type="GO" id="GO:0030060">
    <property type="term" value="F:L-malate dehydrogenase (NAD+) activity"/>
    <property type="evidence" value="ECO:0007669"/>
    <property type="project" value="UniProtKB-EC"/>
</dbReference>
<dbReference type="GO" id="GO:0006099">
    <property type="term" value="P:tricarboxylic acid cycle"/>
    <property type="evidence" value="ECO:0007669"/>
    <property type="project" value="UniProtKB-KW"/>
</dbReference>
<evidence type="ECO:0000250" key="1">
    <source>
        <dbReference type="UniProtKB" id="P80040"/>
    </source>
</evidence>
<evidence type="ECO:0000250" key="2">
    <source>
        <dbReference type="UniProtKB" id="Q25QU7"/>
    </source>
</evidence>
<evidence type="ECO:0000305" key="3"/>
<name>MDH_BREDI</name>
<comment type="function">
    <text evidence="2">Catalyzes the reversible oxidation of malate to oxaloacetate.</text>
</comment>
<comment type="catalytic activity">
    <reaction evidence="2">
        <text>(S)-malate + NAD(+) = oxaloacetate + NADH + H(+)</text>
        <dbReference type="Rhea" id="RHEA:21432"/>
        <dbReference type="ChEBI" id="CHEBI:15378"/>
        <dbReference type="ChEBI" id="CHEBI:15589"/>
        <dbReference type="ChEBI" id="CHEBI:16452"/>
        <dbReference type="ChEBI" id="CHEBI:57540"/>
        <dbReference type="ChEBI" id="CHEBI:57945"/>
        <dbReference type="EC" id="1.1.1.37"/>
    </reaction>
</comment>
<comment type="similarity">
    <text evidence="3">Belongs to the LDH/MDH superfamily. MDH type 3 family.</text>
</comment>
<protein>
    <recommendedName>
        <fullName evidence="2">Malate dehydrogenase</fullName>
        <ecNumber evidence="2">1.1.1.37</ecNumber>
    </recommendedName>
</protein>
<reference key="1">
    <citation type="journal article" date="1997" name="J. Bacteriol.">
        <title>Structural studies of malate dehydrogenases (MDHs): MDHs in Brevundimonas species are the first reported MDHs in Proteobacteria which resemble lactate dehydrogenases in primary structure.</title>
        <authorList>
            <person name="Charnock C."/>
        </authorList>
    </citation>
    <scope>PROTEIN SEQUENCE</scope>
    <source>
        <strain>ATCC 11568 / DSM 7234 / JCM 2788 / NCIB 9393 / NCTC 8545</strain>
    </source>
</reference>
<proteinExistence type="evidence at protein level"/>
<keyword id="KW-0903">Direct protein sequencing</keyword>
<keyword id="KW-0520">NAD</keyword>
<keyword id="KW-0560">Oxidoreductase</keyword>
<keyword id="KW-0816">Tricarboxylic acid cycle</keyword>
<organism>
    <name type="scientific">Brevundimonas diminuta</name>
    <name type="common">Pseudomonas diminuta</name>
    <dbReference type="NCBI Taxonomy" id="293"/>
    <lineage>
        <taxon>Bacteria</taxon>
        <taxon>Pseudomonadati</taxon>
        <taxon>Pseudomonadota</taxon>
        <taxon>Alphaproteobacteria</taxon>
        <taxon>Caulobacterales</taxon>
        <taxon>Caulobacteraceae</taxon>
        <taxon>Brevundimonas</taxon>
    </lineage>
</organism>
<sequence length="19" mass="1710">AXAKIALIGAGMIGGTLAA</sequence>
<accession>P80542</accession>
<feature type="chain" id="PRO_0000113440" description="Malate dehydrogenase">
    <location>
        <begin position="1"/>
        <end position="19" status="greater than"/>
    </location>
</feature>
<feature type="binding site" evidence="1">
    <location>
        <begin position="9"/>
        <end position="14"/>
    </location>
    <ligand>
        <name>NAD(+)</name>
        <dbReference type="ChEBI" id="CHEBI:57540"/>
    </ligand>
</feature>
<feature type="non-terminal residue">
    <location>
        <position position="19"/>
    </location>
</feature>